<reference key="1">
    <citation type="journal article" date="1999" name="Nature">
        <title>Sequence and analysis of chromosome 4 of the plant Arabidopsis thaliana.</title>
        <authorList>
            <person name="Mayer K.F.X."/>
            <person name="Schueller C."/>
            <person name="Wambutt R."/>
            <person name="Murphy G."/>
            <person name="Volckaert G."/>
            <person name="Pohl T."/>
            <person name="Duesterhoeft A."/>
            <person name="Stiekema W."/>
            <person name="Entian K.-D."/>
            <person name="Terryn N."/>
            <person name="Harris B."/>
            <person name="Ansorge W."/>
            <person name="Brandt P."/>
            <person name="Grivell L.A."/>
            <person name="Rieger M."/>
            <person name="Weichselgartner M."/>
            <person name="de Simone V."/>
            <person name="Obermaier B."/>
            <person name="Mache R."/>
            <person name="Mueller M."/>
            <person name="Kreis M."/>
            <person name="Delseny M."/>
            <person name="Puigdomenech P."/>
            <person name="Watson M."/>
            <person name="Schmidtheini T."/>
            <person name="Reichert B."/>
            <person name="Portetelle D."/>
            <person name="Perez-Alonso M."/>
            <person name="Boutry M."/>
            <person name="Bancroft I."/>
            <person name="Vos P."/>
            <person name="Hoheisel J."/>
            <person name="Zimmermann W."/>
            <person name="Wedler H."/>
            <person name="Ridley P."/>
            <person name="Langham S.-A."/>
            <person name="McCullagh B."/>
            <person name="Bilham L."/>
            <person name="Robben J."/>
            <person name="van der Schueren J."/>
            <person name="Grymonprez B."/>
            <person name="Chuang Y.-J."/>
            <person name="Vandenbussche F."/>
            <person name="Braeken M."/>
            <person name="Weltjens I."/>
            <person name="Voet M."/>
            <person name="Bastiaens I."/>
            <person name="Aert R."/>
            <person name="Defoor E."/>
            <person name="Weitzenegger T."/>
            <person name="Bothe G."/>
            <person name="Ramsperger U."/>
            <person name="Hilbert H."/>
            <person name="Braun M."/>
            <person name="Holzer E."/>
            <person name="Brandt A."/>
            <person name="Peters S."/>
            <person name="van Staveren M."/>
            <person name="Dirkse W."/>
            <person name="Mooijman P."/>
            <person name="Klein Lankhorst R."/>
            <person name="Rose M."/>
            <person name="Hauf J."/>
            <person name="Koetter P."/>
            <person name="Berneiser S."/>
            <person name="Hempel S."/>
            <person name="Feldpausch M."/>
            <person name="Lamberth S."/>
            <person name="Van den Daele H."/>
            <person name="De Keyser A."/>
            <person name="Buysshaert C."/>
            <person name="Gielen J."/>
            <person name="Villarroel R."/>
            <person name="De Clercq R."/>
            <person name="van Montagu M."/>
            <person name="Rogers J."/>
            <person name="Cronin A."/>
            <person name="Quail M.A."/>
            <person name="Bray-Allen S."/>
            <person name="Clark L."/>
            <person name="Doggett J."/>
            <person name="Hall S."/>
            <person name="Kay M."/>
            <person name="Lennard N."/>
            <person name="McLay K."/>
            <person name="Mayes R."/>
            <person name="Pettett A."/>
            <person name="Rajandream M.A."/>
            <person name="Lyne M."/>
            <person name="Benes V."/>
            <person name="Rechmann S."/>
            <person name="Borkova D."/>
            <person name="Bloecker H."/>
            <person name="Scharfe M."/>
            <person name="Grimm M."/>
            <person name="Loehnert T.-H."/>
            <person name="Dose S."/>
            <person name="de Haan M."/>
            <person name="Maarse A.C."/>
            <person name="Schaefer M."/>
            <person name="Mueller-Auer S."/>
            <person name="Gabel C."/>
            <person name="Fuchs M."/>
            <person name="Fartmann B."/>
            <person name="Granderath K."/>
            <person name="Dauner D."/>
            <person name="Herzl A."/>
            <person name="Neumann S."/>
            <person name="Argiriou A."/>
            <person name="Vitale D."/>
            <person name="Liguori R."/>
            <person name="Piravandi E."/>
            <person name="Massenet O."/>
            <person name="Quigley F."/>
            <person name="Clabauld G."/>
            <person name="Muendlein A."/>
            <person name="Felber R."/>
            <person name="Schnabl S."/>
            <person name="Hiller R."/>
            <person name="Schmidt W."/>
            <person name="Lecharny A."/>
            <person name="Aubourg S."/>
            <person name="Chefdor F."/>
            <person name="Cooke R."/>
            <person name="Berger C."/>
            <person name="Monfort A."/>
            <person name="Casacuberta E."/>
            <person name="Gibbons T."/>
            <person name="Weber N."/>
            <person name="Vandenbol M."/>
            <person name="Bargues M."/>
            <person name="Terol J."/>
            <person name="Torres A."/>
            <person name="Perez-Perez A."/>
            <person name="Purnelle B."/>
            <person name="Bent E."/>
            <person name="Johnson S."/>
            <person name="Tacon D."/>
            <person name="Jesse T."/>
            <person name="Heijnen L."/>
            <person name="Schwarz S."/>
            <person name="Scholler P."/>
            <person name="Heber S."/>
            <person name="Francs P."/>
            <person name="Bielke C."/>
            <person name="Frishman D."/>
            <person name="Haase D."/>
            <person name="Lemcke K."/>
            <person name="Mewes H.-W."/>
            <person name="Stocker S."/>
            <person name="Zaccaria P."/>
            <person name="Bevan M."/>
            <person name="Wilson R.K."/>
            <person name="de la Bastide M."/>
            <person name="Habermann K."/>
            <person name="Parnell L."/>
            <person name="Dedhia N."/>
            <person name="Gnoj L."/>
            <person name="Schutz K."/>
            <person name="Huang E."/>
            <person name="Spiegel L."/>
            <person name="Sekhon M."/>
            <person name="Murray J."/>
            <person name="Sheet P."/>
            <person name="Cordes M."/>
            <person name="Abu-Threideh J."/>
            <person name="Stoneking T."/>
            <person name="Kalicki J."/>
            <person name="Graves T."/>
            <person name="Harmon G."/>
            <person name="Edwards J."/>
            <person name="Latreille P."/>
            <person name="Courtney L."/>
            <person name="Cloud J."/>
            <person name="Abbott A."/>
            <person name="Scott K."/>
            <person name="Johnson D."/>
            <person name="Minx P."/>
            <person name="Bentley D."/>
            <person name="Fulton B."/>
            <person name="Miller N."/>
            <person name="Greco T."/>
            <person name="Kemp K."/>
            <person name="Kramer J."/>
            <person name="Fulton L."/>
            <person name="Mardis E."/>
            <person name="Dante M."/>
            <person name="Pepin K."/>
            <person name="Hillier L.W."/>
            <person name="Nelson J."/>
            <person name="Spieth J."/>
            <person name="Ryan E."/>
            <person name="Andrews S."/>
            <person name="Geisel C."/>
            <person name="Layman D."/>
            <person name="Du H."/>
            <person name="Ali J."/>
            <person name="Berghoff A."/>
            <person name="Jones K."/>
            <person name="Drone K."/>
            <person name="Cotton M."/>
            <person name="Joshu C."/>
            <person name="Antonoiu B."/>
            <person name="Zidanic M."/>
            <person name="Strong C."/>
            <person name="Sun H."/>
            <person name="Lamar B."/>
            <person name="Yordan C."/>
            <person name="Ma P."/>
            <person name="Zhong J."/>
            <person name="Preston R."/>
            <person name="Vil D."/>
            <person name="Shekher M."/>
            <person name="Matero A."/>
            <person name="Shah R."/>
            <person name="Swaby I.K."/>
            <person name="O'Shaughnessy A."/>
            <person name="Rodriguez M."/>
            <person name="Hoffman J."/>
            <person name="Till S."/>
            <person name="Granat S."/>
            <person name="Shohdy N."/>
            <person name="Hasegawa A."/>
            <person name="Hameed A."/>
            <person name="Lodhi M."/>
            <person name="Johnson A."/>
            <person name="Chen E."/>
            <person name="Marra M.A."/>
            <person name="Martienssen R."/>
            <person name="McCombie W.R."/>
        </authorList>
    </citation>
    <scope>NUCLEOTIDE SEQUENCE [LARGE SCALE GENOMIC DNA]</scope>
    <source>
        <strain>cv. Columbia</strain>
    </source>
</reference>
<reference key="2">
    <citation type="journal article" date="2017" name="Plant J.">
        <title>Araport11: a complete reannotation of the Arabidopsis thaliana reference genome.</title>
        <authorList>
            <person name="Cheng C.Y."/>
            <person name="Krishnakumar V."/>
            <person name="Chan A.P."/>
            <person name="Thibaud-Nissen F."/>
            <person name="Schobel S."/>
            <person name="Town C.D."/>
        </authorList>
    </citation>
    <scope>GENOME REANNOTATION</scope>
    <source>
        <strain>cv. Columbia</strain>
    </source>
</reference>
<reference key="3">
    <citation type="journal article" date="2002" name="Mol. Genet. Genomics">
        <title>Genomic analysis of the terpenoid synthase (AtTPS) gene family of Arabidopsis thaliana.</title>
        <authorList>
            <person name="Aubourg S."/>
            <person name="Lecharny A."/>
            <person name="Bohlmann J."/>
        </authorList>
    </citation>
    <scope>GENE FAMILY</scope>
    <scope>NOMENCLATURE</scope>
</reference>
<reference key="4">
    <citation type="journal article" date="2003" name="Plant Cell">
        <title>Biosynthesis and emission of terpenoid volatiles from Arabidopsis flowers.</title>
        <authorList>
            <person name="Chen F."/>
            <person name="Tholl D."/>
            <person name="D'Auria J.C."/>
            <person name="Farooq A."/>
            <person name="Pichersky E."/>
            <person name="Gershenzon J."/>
        </authorList>
    </citation>
    <scope>TISSUE SPECIFICITY</scope>
</reference>
<reference key="5">
    <citation type="journal article" date="2003" name="Plant Mol. Biol.">
        <title>Genome organization in Arabidopsis thaliana: a survey for genes involved in isoprenoid and chlorophyll metabolism.</title>
        <authorList>
            <person name="Lange B.M."/>
            <person name="Ghassemian M."/>
        </authorList>
    </citation>
    <scope>GENE FAMILY</scope>
</reference>
<reference key="6">
    <citation type="journal article" date="2006" name="Arch. Biochem. Biophys.">
        <title>Microarray expression profiling and functional characterization of AtTPS genes: duplicated Arabidopsis thaliana sesquiterpene synthase genes At4g13280 and At4g13300 encode root-specific and wound-inducible (Z)-gamma-bisabolene synthases.</title>
        <authorList>
            <person name="Ro D.-K."/>
            <person name="Ehlting J."/>
            <person name="Keeling C.I."/>
            <person name="Lin R."/>
            <person name="Mattheus N."/>
            <person name="Bohlmann J."/>
        </authorList>
    </citation>
    <scope>FUNCTION</scope>
    <scope>CATALYTIC ACTIVITY</scope>
    <scope>TISSUE SPECIFICITY</scope>
    <scope>INDUCTION</scope>
</reference>
<evidence type="ECO:0000250" key="1"/>
<evidence type="ECO:0000269" key="2">
    <source>
    </source>
</evidence>
<evidence type="ECO:0000269" key="3">
    <source>
    </source>
</evidence>
<evidence type="ECO:0000305" key="4"/>
<organism>
    <name type="scientific">Arabidopsis thaliana</name>
    <name type="common">Mouse-ear cress</name>
    <dbReference type="NCBI Taxonomy" id="3702"/>
    <lineage>
        <taxon>Eukaryota</taxon>
        <taxon>Viridiplantae</taxon>
        <taxon>Streptophyta</taxon>
        <taxon>Embryophyta</taxon>
        <taxon>Tracheophyta</taxon>
        <taxon>Spermatophyta</taxon>
        <taxon>Magnoliopsida</taxon>
        <taxon>eudicotyledons</taxon>
        <taxon>Gunneridae</taxon>
        <taxon>Pentapetalae</taxon>
        <taxon>rosids</taxon>
        <taxon>malvids</taxon>
        <taxon>Brassicales</taxon>
        <taxon>Brassicaceae</taxon>
        <taxon>Camelineae</taxon>
        <taxon>Arabidopsis</taxon>
    </lineage>
</organism>
<gene>
    <name type="primary">TPS13</name>
    <name type="ordered locus">At4g13300</name>
    <name type="ORF">T9E8.40</name>
</gene>
<protein>
    <recommendedName>
        <fullName>(Z)-gamma-bisabolene synthase 2</fullName>
        <ecNumber>4.2.3.40</ecNumber>
    </recommendedName>
    <alternativeName>
        <fullName>Terpenoid synthase 13</fullName>
        <shortName>AtTPS13</shortName>
    </alternativeName>
</protein>
<dbReference type="EC" id="4.2.3.40"/>
<dbReference type="EMBL" id="AL049608">
    <property type="protein sequence ID" value="CAB40765.1"/>
    <property type="status" value="ALT_SEQ"/>
    <property type="molecule type" value="Genomic_DNA"/>
</dbReference>
<dbReference type="EMBL" id="AL161536">
    <property type="protein sequence ID" value="CAB78372.1"/>
    <property type="status" value="ALT_SEQ"/>
    <property type="molecule type" value="Genomic_DNA"/>
</dbReference>
<dbReference type="EMBL" id="CP002687">
    <property type="protein sequence ID" value="AEE83260.1"/>
    <property type="molecule type" value="Genomic_DNA"/>
</dbReference>
<dbReference type="PIR" id="T06287">
    <property type="entry name" value="T06287"/>
</dbReference>
<dbReference type="RefSeq" id="NP_193066.4">
    <property type="nucleotide sequence ID" value="NM_117403.5"/>
</dbReference>
<dbReference type="SMR" id="Q9T0K1"/>
<dbReference type="FunCoup" id="Q9T0K1">
    <property type="interactions" value="41"/>
</dbReference>
<dbReference type="STRING" id="3702.Q9T0K1"/>
<dbReference type="PaxDb" id="3702-AT4G13300.1"/>
<dbReference type="ProteomicsDB" id="248560"/>
<dbReference type="EnsemblPlants" id="AT4G13300.1">
    <property type="protein sequence ID" value="AT4G13300.1"/>
    <property type="gene ID" value="AT4G13300"/>
</dbReference>
<dbReference type="GeneID" id="826960"/>
<dbReference type="Gramene" id="AT4G13300.1">
    <property type="protein sequence ID" value="AT4G13300.1"/>
    <property type="gene ID" value="AT4G13300"/>
</dbReference>
<dbReference type="KEGG" id="ath:AT4G13300"/>
<dbReference type="Araport" id="AT4G13300"/>
<dbReference type="TAIR" id="AT4G13300">
    <property type="gene designation" value="TPS13"/>
</dbReference>
<dbReference type="eggNOG" id="ENOG502QUCN">
    <property type="taxonomic scope" value="Eukaryota"/>
</dbReference>
<dbReference type="HOGENOM" id="CLU_003125_7_2_1"/>
<dbReference type="InParanoid" id="Q9T0K1"/>
<dbReference type="OMA" id="CVERWNH"/>
<dbReference type="PhylomeDB" id="Q9T0K1"/>
<dbReference type="BioCyc" id="ARA:AT4G13300-MONOMER"/>
<dbReference type="BioCyc" id="MetaCyc:AT4G13300-MONOMER"/>
<dbReference type="UniPathway" id="UPA00213"/>
<dbReference type="PRO" id="PR:Q9T0K1"/>
<dbReference type="Proteomes" id="UP000006548">
    <property type="component" value="Chromosome 4"/>
</dbReference>
<dbReference type="ExpressionAtlas" id="Q9T0K1">
    <property type="expression patterns" value="baseline and differential"/>
</dbReference>
<dbReference type="GO" id="GO:0005737">
    <property type="term" value="C:cytoplasm"/>
    <property type="evidence" value="ECO:0007669"/>
    <property type="project" value="UniProtKB-SubCell"/>
</dbReference>
<dbReference type="GO" id="GO:0052683">
    <property type="term" value="F:(Z)-gamma-bisabolene synthase activity"/>
    <property type="evidence" value="ECO:0007669"/>
    <property type="project" value="UniProtKB-EC"/>
</dbReference>
<dbReference type="GO" id="GO:0009975">
    <property type="term" value="F:cyclase activity"/>
    <property type="evidence" value="ECO:0000314"/>
    <property type="project" value="TAIR"/>
</dbReference>
<dbReference type="GO" id="GO:0000287">
    <property type="term" value="F:magnesium ion binding"/>
    <property type="evidence" value="ECO:0007669"/>
    <property type="project" value="InterPro"/>
</dbReference>
<dbReference type="GO" id="GO:0010333">
    <property type="term" value="F:terpene synthase activity"/>
    <property type="evidence" value="ECO:0007669"/>
    <property type="project" value="InterPro"/>
</dbReference>
<dbReference type="GO" id="GO:0016102">
    <property type="term" value="P:diterpenoid biosynthetic process"/>
    <property type="evidence" value="ECO:0007669"/>
    <property type="project" value="InterPro"/>
</dbReference>
<dbReference type="GO" id="GO:0045338">
    <property type="term" value="P:farnesyl diphosphate metabolic process"/>
    <property type="evidence" value="ECO:0000314"/>
    <property type="project" value="TAIR"/>
</dbReference>
<dbReference type="GO" id="GO:0009611">
    <property type="term" value="P:response to wounding"/>
    <property type="evidence" value="ECO:0000270"/>
    <property type="project" value="TAIR"/>
</dbReference>
<dbReference type="GO" id="GO:0016106">
    <property type="term" value="P:sesquiterpenoid biosynthetic process"/>
    <property type="evidence" value="ECO:0000314"/>
    <property type="project" value="TAIR"/>
</dbReference>
<dbReference type="CDD" id="cd00684">
    <property type="entry name" value="Terpene_cyclase_plant_C1"/>
    <property type="match status" value="1"/>
</dbReference>
<dbReference type="FunFam" id="1.10.600.10:FF:000007">
    <property type="entry name" value="Isoprene synthase, chloroplastic"/>
    <property type="match status" value="1"/>
</dbReference>
<dbReference type="FunFam" id="1.50.10.130:FF:000001">
    <property type="entry name" value="Isoprene synthase, chloroplastic"/>
    <property type="match status" value="1"/>
</dbReference>
<dbReference type="Gene3D" id="1.10.600.10">
    <property type="entry name" value="Farnesyl Diphosphate Synthase"/>
    <property type="match status" value="1"/>
</dbReference>
<dbReference type="Gene3D" id="1.50.10.130">
    <property type="entry name" value="Terpene synthase, N-terminal domain"/>
    <property type="match status" value="1"/>
</dbReference>
<dbReference type="InterPro" id="IPR008949">
    <property type="entry name" value="Isoprenoid_synthase_dom_sf"/>
</dbReference>
<dbReference type="InterPro" id="IPR044814">
    <property type="entry name" value="Terpene_cyclase_plant_C1"/>
</dbReference>
<dbReference type="InterPro" id="IPR001906">
    <property type="entry name" value="Terpene_synth_N"/>
</dbReference>
<dbReference type="InterPro" id="IPR036965">
    <property type="entry name" value="Terpene_synth_N_sf"/>
</dbReference>
<dbReference type="InterPro" id="IPR050148">
    <property type="entry name" value="Terpene_synthase-like"/>
</dbReference>
<dbReference type="InterPro" id="IPR005630">
    <property type="entry name" value="Terpene_synthase_metal-bd"/>
</dbReference>
<dbReference type="InterPro" id="IPR008930">
    <property type="entry name" value="Terpenoid_cyclase/PrenylTrfase"/>
</dbReference>
<dbReference type="PANTHER" id="PTHR31225">
    <property type="entry name" value="OS04G0344100 PROTEIN-RELATED"/>
    <property type="match status" value="1"/>
</dbReference>
<dbReference type="PANTHER" id="PTHR31225:SF242">
    <property type="entry name" value="TERPENOID SYNTHASE 9"/>
    <property type="match status" value="1"/>
</dbReference>
<dbReference type="Pfam" id="PF01397">
    <property type="entry name" value="Terpene_synth"/>
    <property type="match status" value="1"/>
</dbReference>
<dbReference type="Pfam" id="PF03936">
    <property type="entry name" value="Terpene_synth_C"/>
    <property type="match status" value="1"/>
</dbReference>
<dbReference type="SUPFAM" id="SSF48239">
    <property type="entry name" value="Terpenoid cyclases/Protein prenyltransferases"/>
    <property type="match status" value="1"/>
</dbReference>
<dbReference type="SUPFAM" id="SSF48576">
    <property type="entry name" value="Terpenoid synthases"/>
    <property type="match status" value="1"/>
</dbReference>
<keyword id="KW-0963">Cytoplasm</keyword>
<keyword id="KW-0456">Lyase</keyword>
<keyword id="KW-0460">Magnesium</keyword>
<keyword id="KW-0464">Manganese</keyword>
<keyword id="KW-0479">Metal-binding</keyword>
<keyword id="KW-1185">Reference proteome</keyword>
<feature type="chain" id="PRO_0000380672" description="(Z)-gamma-bisabolene synthase 2">
    <location>
        <begin position="1"/>
        <end position="554"/>
    </location>
</feature>
<feature type="short sequence motif" description="DDXXD motif">
    <location>
        <begin position="306"/>
        <end position="310"/>
    </location>
</feature>
<feature type="binding site" evidence="1">
    <location>
        <position position="306"/>
    </location>
    <ligand>
        <name>Mg(2+)</name>
        <dbReference type="ChEBI" id="CHEBI:18420"/>
        <label>1</label>
    </ligand>
</feature>
<feature type="binding site" evidence="1">
    <location>
        <position position="306"/>
    </location>
    <ligand>
        <name>Mg(2+)</name>
        <dbReference type="ChEBI" id="CHEBI:18420"/>
        <label>2</label>
    </ligand>
</feature>
<feature type="binding site" evidence="1">
    <location>
        <position position="310"/>
    </location>
    <ligand>
        <name>Mg(2+)</name>
        <dbReference type="ChEBI" id="CHEBI:18420"/>
        <label>1</label>
    </ligand>
</feature>
<feature type="binding site" evidence="1">
    <location>
        <position position="310"/>
    </location>
    <ligand>
        <name>Mg(2+)</name>
        <dbReference type="ChEBI" id="CHEBI:18420"/>
        <label>2</label>
    </ligand>
</feature>
<feature type="binding site" evidence="1">
    <location>
        <position position="450"/>
    </location>
    <ligand>
        <name>Mg(2+)</name>
        <dbReference type="ChEBI" id="CHEBI:18420"/>
        <label>3</label>
    </ligand>
</feature>
<feature type="binding site" evidence="1">
    <location>
        <position position="458"/>
    </location>
    <ligand>
        <name>Mg(2+)</name>
        <dbReference type="ChEBI" id="CHEBI:18420"/>
        <label>3</label>
    </ligand>
</feature>
<accession>Q9T0K1</accession>
<name>GBIS2_ARATH</name>
<sequence length="554" mass="64145">MESQTKFDYESLAFTKLSHSQWTDYFLSVPIDDSELDAITREIDIIKPEVRKLLSSKGDDETSKRKVLLIQSLLSLGLAFHFENEIKDILEDAFRRIDDITGDENDLSTISIMFRVFRTYGHNLPSSVFKRFTGDDGKFERSLTEDAKGILSLYEAAHLGTTTDYILDEALEFTSSHLKSLLVGGMCRPHILRLIRNTLYLPQRWNMEAVIAREYISFYEQEEDHDKMLLRLAKLNFKLLQLHYIKELKTFIKWWMELGLTSKWPSQFRERIVEAWLAGLMMYFEPQFSGGRVIAAKFNYLLTILDDACDHYFSIPELTRLVDCVERWNHDGIHTLEDISRIIFKLALDVFDDIGRGVRSKGCSYYLKEMLEELKILVRANLDLVKWARGNQLPSFEEHVEVGGIALTTYATLMYSFVGMGEAVGKEAYEWVRSRPRLIKSLAAKGRLMDDITDFESDMSNGFAANAINYYMKQFVVTKEEAILECQKMVVDINKIVNEELLKTTTVPRRVLKQALNFGRLLEVLYTKSDDIYNCSEGKLKEYIVTLLIDPIHL</sequence>
<comment type="function">
    <text evidence="3">Involved in sesquiterpene (C15) biosynthesis. The major product is (Z)-gamma-bisabolene with minor amounts of (E)-nerolidol and alpha-bisabolol.</text>
</comment>
<comment type="catalytic activity">
    <reaction evidence="3">
        <text>(2E,6E)-farnesyl diphosphate = (Z)-gamma-bisabolene + diphosphate</text>
        <dbReference type="Rhea" id="RHEA:26081"/>
        <dbReference type="ChEBI" id="CHEBI:33019"/>
        <dbReference type="ChEBI" id="CHEBI:49238"/>
        <dbReference type="ChEBI" id="CHEBI:175763"/>
        <dbReference type="EC" id="4.2.3.40"/>
    </reaction>
</comment>
<comment type="cofactor">
    <cofactor evidence="1">
        <name>Mg(2+)</name>
        <dbReference type="ChEBI" id="CHEBI:18420"/>
    </cofactor>
    <cofactor evidence="1">
        <name>Mn(2+)</name>
        <dbReference type="ChEBI" id="CHEBI:29035"/>
    </cofactor>
    <text evidence="1">Binds 3 Mg(2+) or Mn(2+) ions per subunit.</text>
</comment>
<comment type="pathway">
    <text>Secondary metabolite biosynthesis; terpenoid biosynthesis.</text>
</comment>
<comment type="subcellular location">
    <subcellularLocation>
        <location evidence="4">Cytoplasm</location>
    </subcellularLocation>
</comment>
<comment type="tissue specificity">
    <text evidence="2 3">Predominantly expressed in roots. Expressed in the cortex and the sub-epidermal layers of roots. Also detected in leaf hydathodes and flower stigmata.</text>
</comment>
<comment type="induction">
    <text evidence="3">By wounding.</text>
</comment>
<comment type="domain">
    <text>The Asp-Asp-Xaa-Xaa-Asp/Glu (DDXXD/E) motif is important for the catalytic activity, presumably through binding to Mg(2+).</text>
</comment>
<comment type="similarity">
    <text evidence="4">Belongs to the terpene synthase family. Tpsa subfamily.</text>
</comment>
<comment type="sequence caution" evidence="4">
    <conflict type="erroneous gene model prediction">
        <sequence resource="EMBL-CDS" id="CAB40765"/>
    </conflict>
</comment>
<comment type="sequence caution" evidence="4">
    <conflict type="erroneous gene model prediction">
        <sequence resource="EMBL-CDS" id="CAB78372"/>
    </conflict>
</comment>
<proteinExistence type="evidence at protein level"/>